<comment type="function">
    <text evidence="1">Associates with the EF-Tu.GDP complex and induces the exchange of GDP to GTP. It remains bound to the aminoacyl-tRNA.EF-Tu.GTP complex up to the GTP hydrolysis stage on the ribosome.</text>
</comment>
<comment type="subcellular location">
    <subcellularLocation>
        <location evidence="1">Cytoplasm</location>
    </subcellularLocation>
</comment>
<comment type="similarity">
    <text evidence="1">Belongs to the EF-Ts family.</text>
</comment>
<feature type="chain" id="PRO_0000161121" description="Elongation factor Ts">
    <location>
        <begin position="1"/>
        <end position="283"/>
    </location>
</feature>
<feature type="region of interest" description="Involved in Mg(2+) ion dislocation from EF-Tu" evidence="1">
    <location>
        <begin position="80"/>
        <end position="83"/>
    </location>
</feature>
<evidence type="ECO:0000255" key="1">
    <source>
        <dbReference type="HAMAP-Rule" id="MF_00050"/>
    </source>
</evidence>
<gene>
    <name evidence="1" type="primary">tsf</name>
    <name type="ordered locus">ECA1032</name>
</gene>
<protein>
    <recommendedName>
        <fullName evidence="1">Elongation factor Ts</fullName>
        <shortName evidence="1">EF-Ts</shortName>
    </recommendedName>
</protein>
<accession>Q6D8E2</accession>
<organism>
    <name type="scientific">Pectobacterium atrosepticum (strain SCRI 1043 / ATCC BAA-672)</name>
    <name type="common">Erwinia carotovora subsp. atroseptica</name>
    <dbReference type="NCBI Taxonomy" id="218491"/>
    <lineage>
        <taxon>Bacteria</taxon>
        <taxon>Pseudomonadati</taxon>
        <taxon>Pseudomonadota</taxon>
        <taxon>Gammaproteobacteria</taxon>
        <taxon>Enterobacterales</taxon>
        <taxon>Pectobacteriaceae</taxon>
        <taxon>Pectobacterium</taxon>
    </lineage>
</organism>
<dbReference type="EMBL" id="BX950851">
    <property type="protein sequence ID" value="CAG73943.1"/>
    <property type="molecule type" value="Genomic_DNA"/>
</dbReference>
<dbReference type="RefSeq" id="WP_011092631.1">
    <property type="nucleotide sequence ID" value="NC_004547.2"/>
</dbReference>
<dbReference type="SMR" id="Q6D8E2"/>
<dbReference type="STRING" id="218491.ECA1032"/>
<dbReference type="GeneID" id="57207861"/>
<dbReference type="KEGG" id="eca:ECA1032"/>
<dbReference type="PATRIC" id="fig|218491.5.peg.1040"/>
<dbReference type="eggNOG" id="COG0264">
    <property type="taxonomic scope" value="Bacteria"/>
</dbReference>
<dbReference type="HOGENOM" id="CLU_047155_0_2_6"/>
<dbReference type="OrthoDB" id="9808348at2"/>
<dbReference type="Proteomes" id="UP000007966">
    <property type="component" value="Chromosome"/>
</dbReference>
<dbReference type="GO" id="GO:0005737">
    <property type="term" value="C:cytoplasm"/>
    <property type="evidence" value="ECO:0007669"/>
    <property type="project" value="UniProtKB-SubCell"/>
</dbReference>
<dbReference type="GO" id="GO:0003746">
    <property type="term" value="F:translation elongation factor activity"/>
    <property type="evidence" value="ECO:0007669"/>
    <property type="project" value="UniProtKB-UniRule"/>
</dbReference>
<dbReference type="CDD" id="cd14275">
    <property type="entry name" value="UBA_EF-Ts"/>
    <property type="match status" value="1"/>
</dbReference>
<dbReference type="FunFam" id="1.10.286.20:FF:000001">
    <property type="entry name" value="Elongation factor Ts"/>
    <property type="match status" value="1"/>
</dbReference>
<dbReference type="FunFam" id="1.10.8.10:FF:000001">
    <property type="entry name" value="Elongation factor Ts"/>
    <property type="match status" value="1"/>
</dbReference>
<dbReference type="FunFam" id="3.30.479.20:FF:000001">
    <property type="entry name" value="Elongation factor Ts"/>
    <property type="match status" value="1"/>
</dbReference>
<dbReference type="Gene3D" id="1.10.286.20">
    <property type="match status" value="1"/>
</dbReference>
<dbReference type="Gene3D" id="1.10.8.10">
    <property type="entry name" value="DNA helicase RuvA subunit, C-terminal domain"/>
    <property type="match status" value="1"/>
</dbReference>
<dbReference type="Gene3D" id="3.30.479.20">
    <property type="entry name" value="Elongation factor Ts, dimerisation domain"/>
    <property type="match status" value="2"/>
</dbReference>
<dbReference type="HAMAP" id="MF_00050">
    <property type="entry name" value="EF_Ts"/>
    <property type="match status" value="1"/>
</dbReference>
<dbReference type="InterPro" id="IPR036402">
    <property type="entry name" value="EF-Ts_dimer_sf"/>
</dbReference>
<dbReference type="InterPro" id="IPR001816">
    <property type="entry name" value="Transl_elong_EFTs/EF1B"/>
</dbReference>
<dbReference type="InterPro" id="IPR014039">
    <property type="entry name" value="Transl_elong_EFTs/EF1B_dimer"/>
</dbReference>
<dbReference type="InterPro" id="IPR018101">
    <property type="entry name" value="Transl_elong_Ts_CS"/>
</dbReference>
<dbReference type="InterPro" id="IPR009060">
    <property type="entry name" value="UBA-like_sf"/>
</dbReference>
<dbReference type="NCBIfam" id="TIGR00116">
    <property type="entry name" value="tsf"/>
    <property type="match status" value="1"/>
</dbReference>
<dbReference type="PANTHER" id="PTHR11741">
    <property type="entry name" value="ELONGATION FACTOR TS"/>
    <property type="match status" value="1"/>
</dbReference>
<dbReference type="PANTHER" id="PTHR11741:SF0">
    <property type="entry name" value="ELONGATION FACTOR TS, MITOCHONDRIAL"/>
    <property type="match status" value="1"/>
</dbReference>
<dbReference type="Pfam" id="PF00889">
    <property type="entry name" value="EF_TS"/>
    <property type="match status" value="1"/>
</dbReference>
<dbReference type="SUPFAM" id="SSF54713">
    <property type="entry name" value="Elongation factor Ts (EF-Ts), dimerisation domain"/>
    <property type="match status" value="2"/>
</dbReference>
<dbReference type="SUPFAM" id="SSF46934">
    <property type="entry name" value="UBA-like"/>
    <property type="match status" value="1"/>
</dbReference>
<dbReference type="PROSITE" id="PS01127">
    <property type="entry name" value="EF_TS_2"/>
    <property type="match status" value="1"/>
</dbReference>
<reference key="1">
    <citation type="journal article" date="2004" name="Proc. Natl. Acad. Sci. U.S.A.">
        <title>Genome sequence of the enterobacterial phytopathogen Erwinia carotovora subsp. atroseptica and characterization of virulence factors.</title>
        <authorList>
            <person name="Bell K.S."/>
            <person name="Sebaihia M."/>
            <person name="Pritchard L."/>
            <person name="Holden M.T.G."/>
            <person name="Hyman L.J."/>
            <person name="Holeva M.C."/>
            <person name="Thomson N.R."/>
            <person name="Bentley S.D."/>
            <person name="Churcher L.J.C."/>
            <person name="Mungall K."/>
            <person name="Atkin R."/>
            <person name="Bason N."/>
            <person name="Brooks K."/>
            <person name="Chillingworth T."/>
            <person name="Clark K."/>
            <person name="Doggett J."/>
            <person name="Fraser A."/>
            <person name="Hance Z."/>
            <person name="Hauser H."/>
            <person name="Jagels K."/>
            <person name="Moule S."/>
            <person name="Norbertczak H."/>
            <person name="Ormond D."/>
            <person name="Price C."/>
            <person name="Quail M.A."/>
            <person name="Sanders M."/>
            <person name="Walker D."/>
            <person name="Whitehead S."/>
            <person name="Salmond G.P.C."/>
            <person name="Birch P.R.J."/>
            <person name="Parkhill J."/>
            <person name="Toth I.K."/>
        </authorList>
    </citation>
    <scope>NUCLEOTIDE SEQUENCE [LARGE SCALE GENOMIC DNA]</scope>
    <source>
        <strain>SCRI 1043 / ATCC BAA-672</strain>
    </source>
</reference>
<name>EFTS_PECAS</name>
<sequence length="283" mass="30419">MAEITASLVKELRERTAAGMMECKKALVEANGDIELAIENMRKSGAIKAAKKAGNVAADGVIKTKIDGNYAVILEVNCQTDFVAKDGGFQAFADKVLDAAVAGKITDVDVLKAQFEEERVALVAKIGENINIRRVSALEGEVLGNYQHGARIGVLVAAKGADEELVKHLAMHVAASKPEFVKPEDVSAEVVAKEYQVQLEIAMQSGKPKEIAEKMVEGRMKKFTGEVSLTGQPFVMDPAKSVGQLLKEHNADVTNFIRFEVGEGIEKVETDFAAEVAAMSKQS</sequence>
<proteinExistence type="inferred from homology"/>
<keyword id="KW-0963">Cytoplasm</keyword>
<keyword id="KW-0251">Elongation factor</keyword>
<keyword id="KW-0648">Protein biosynthesis</keyword>
<keyword id="KW-1185">Reference proteome</keyword>